<evidence type="ECO:0000255" key="1">
    <source>
        <dbReference type="HAMAP-Rule" id="MF_00102"/>
    </source>
</evidence>
<evidence type="ECO:0000305" key="2"/>
<accession>Q1CU21</accession>
<feature type="chain" id="PRO_1000008573" description="4-hydroxy-tetrahydrodipicolinate reductase">
    <location>
        <begin position="1"/>
        <end position="254"/>
    </location>
</feature>
<feature type="active site" description="Proton donor/acceptor" evidence="1">
    <location>
        <position position="147"/>
    </location>
</feature>
<feature type="active site" description="Proton donor" evidence="1">
    <location>
        <position position="151"/>
    </location>
</feature>
<feature type="binding site" evidence="1">
    <location>
        <begin position="7"/>
        <end position="12"/>
    </location>
    <ligand>
        <name>NAD(+)</name>
        <dbReference type="ChEBI" id="CHEBI:57540"/>
    </ligand>
</feature>
<feature type="binding site" evidence="1">
    <location>
        <position position="35"/>
    </location>
    <ligand>
        <name>NADP(+)</name>
        <dbReference type="ChEBI" id="CHEBI:58349"/>
    </ligand>
</feature>
<feature type="binding site" evidence="1">
    <location>
        <begin position="91"/>
        <end position="93"/>
    </location>
    <ligand>
        <name>NAD(+)</name>
        <dbReference type="ChEBI" id="CHEBI:57540"/>
    </ligand>
</feature>
<feature type="binding site" evidence="1">
    <location>
        <begin position="115"/>
        <end position="118"/>
    </location>
    <ligand>
        <name>NAD(+)</name>
        <dbReference type="ChEBI" id="CHEBI:57540"/>
    </ligand>
</feature>
<feature type="binding site" evidence="1">
    <location>
        <position position="148"/>
    </location>
    <ligand>
        <name>(S)-2,3,4,5-tetrahydrodipicolinate</name>
        <dbReference type="ChEBI" id="CHEBI:16845"/>
    </ligand>
</feature>
<feature type="binding site" evidence="1">
    <location>
        <begin position="157"/>
        <end position="158"/>
    </location>
    <ligand>
        <name>(S)-2,3,4,5-tetrahydrodipicolinate</name>
        <dbReference type="ChEBI" id="CHEBI:16845"/>
    </ligand>
</feature>
<gene>
    <name evidence="1" type="primary">dapB</name>
    <name type="ordered locus">HPAG1_0484</name>
</gene>
<protein>
    <recommendedName>
        <fullName evidence="1">4-hydroxy-tetrahydrodipicolinate reductase</fullName>
        <shortName evidence="1">HTPA reductase</shortName>
        <ecNumber evidence="1">1.17.1.8</ecNumber>
    </recommendedName>
</protein>
<comment type="function">
    <text evidence="1">Catalyzes the conversion of 4-hydroxy-tetrahydrodipicolinate (HTPA) to tetrahydrodipicolinate.</text>
</comment>
<comment type="catalytic activity">
    <reaction evidence="1">
        <text>(S)-2,3,4,5-tetrahydrodipicolinate + NAD(+) + H2O = (2S,4S)-4-hydroxy-2,3,4,5-tetrahydrodipicolinate + NADH + H(+)</text>
        <dbReference type="Rhea" id="RHEA:35323"/>
        <dbReference type="ChEBI" id="CHEBI:15377"/>
        <dbReference type="ChEBI" id="CHEBI:15378"/>
        <dbReference type="ChEBI" id="CHEBI:16845"/>
        <dbReference type="ChEBI" id="CHEBI:57540"/>
        <dbReference type="ChEBI" id="CHEBI:57945"/>
        <dbReference type="ChEBI" id="CHEBI:67139"/>
        <dbReference type="EC" id="1.17.1.8"/>
    </reaction>
</comment>
<comment type="catalytic activity">
    <reaction evidence="1">
        <text>(S)-2,3,4,5-tetrahydrodipicolinate + NADP(+) + H2O = (2S,4S)-4-hydroxy-2,3,4,5-tetrahydrodipicolinate + NADPH + H(+)</text>
        <dbReference type="Rhea" id="RHEA:35331"/>
        <dbReference type="ChEBI" id="CHEBI:15377"/>
        <dbReference type="ChEBI" id="CHEBI:15378"/>
        <dbReference type="ChEBI" id="CHEBI:16845"/>
        <dbReference type="ChEBI" id="CHEBI:57783"/>
        <dbReference type="ChEBI" id="CHEBI:58349"/>
        <dbReference type="ChEBI" id="CHEBI:67139"/>
        <dbReference type="EC" id="1.17.1.8"/>
    </reaction>
</comment>
<comment type="pathway">
    <text evidence="1">Amino-acid biosynthesis; L-lysine biosynthesis via DAP pathway; (S)-tetrahydrodipicolinate from L-aspartate: step 4/4.</text>
</comment>
<comment type="subcellular location">
    <subcellularLocation>
        <location evidence="1">Cytoplasm</location>
    </subcellularLocation>
</comment>
<comment type="similarity">
    <text evidence="1">Belongs to the DapB family.</text>
</comment>
<comment type="caution">
    <text evidence="2">Was originally thought to be a dihydrodipicolinate reductase (DHDPR), catalyzing the conversion of dihydrodipicolinate to tetrahydrodipicolinate. However, it was shown in E.coli that the substrate of the enzymatic reaction is not dihydrodipicolinate (DHDP) but in fact (2S,4S)-4-hydroxy-2,3,4,5-tetrahydrodipicolinic acid (HTPA), the product released by the DapA-catalyzed reaction.</text>
</comment>
<sequence length="254" mass="27922">MKIGVYGASGRIGKLLLEELKGGYKGLALSSVFVRQKCETDFSHFSHSPLVTNDLKAFVRACECVIDFSLPKGLDHLLEALLECPKILVSGTTGLEKETLEKMQQLALRVPLLHAHNMSLGIMMFNQLAFLASLKLKDADIEIVETHHNLKKDAPSGTALSLYETCAKARGYDEKNALTTHREGLRSKESIGIAALRGGDVAGKHTIGFYLEGEYIELSHTATNRSIFAKGALEVALWLKDKAAKKYEINEMFG</sequence>
<dbReference type="EC" id="1.17.1.8" evidence="1"/>
<dbReference type="EMBL" id="CP000241">
    <property type="protein sequence ID" value="ABF84551.1"/>
    <property type="molecule type" value="Genomic_DNA"/>
</dbReference>
<dbReference type="RefSeq" id="WP_000690489.1">
    <property type="nucleotide sequence ID" value="NC_008086.1"/>
</dbReference>
<dbReference type="SMR" id="Q1CU21"/>
<dbReference type="KEGG" id="hpa:HPAG1_0484"/>
<dbReference type="HOGENOM" id="CLU_047479_2_2_7"/>
<dbReference type="UniPathway" id="UPA00034">
    <property type="reaction ID" value="UER00018"/>
</dbReference>
<dbReference type="GO" id="GO:0005829">
    <property type="term" value="C:cytosol"/>
    <property type="evidence" value="ECO:0007669"/>
    <property type="project" value="TreeGrafter"/>
</dbReference>
<dbReference type="GO" id="GO:0008839">
    <property type="term" value="F:4-hydroxy-tetrahydrodipicolinate reductase"/>
    <property type="evidence" value="ECO:0007669"/>
    <property type="project" value="UniProtKB-EC"/>
</dbReference>
<dbReference type="GO" id="GO:0051287">
    <property type="term" value="F:NAD binding"/>
    <property type="evidence" value="ECO:0007669"/>
    <property type="project" value="UniProtKB-UniRule"/>
</dbReference>
<dbReference type="GO" id="GO:0050661">
    <property type="term" value="F:NADP binding"/>
    <property type="evidence" value="ECO:0007669"/>
    <property type="project" value="UniProtKB-UniRule"/>
</dbReference>
<dbReference type="GO" id="GO:0016726">
    <property type="term" value="F:oxidoreductase activity, acting on CH or CH2 groups, NAD or NADP as acceptor"/>
    <property type="evidence" value="ECO:0007669"/>
    <property type="project" value="UniProtKB-UniRule"/>
</dbReference>
<dbReference type="GO" id="GO:0019877">
    <property type="term" value="P:diaminopimelate biosynthetic process"/>
    <property type="evidence" value="ECO:0007669"/>
    <property type="project" value="UniProtKB-UniRule"/>
</dbReference>
<dbReference type="GO" id="GO:0009089">
    <property type="term" value="P:lysine biosynthetic process via diaminopimelate"/>
    <property type="evidence" value="ECO:0007669"/>
    <property type="project" value="UniProtKB-UniRule"/>
</dbReference>
<dbReference type="CDD" id="cd02274">
    <property type="entry name" value="DHDPR_N"/>
    <property type="match status" value="1"/>
</dbReference>
<dbReference type="FunFam" id="3.30.360.10:FF:000004">
    <property type="entry name" value="4-hydroxy-tetrahydrodipicolinate reductase"/>
    <property type="match status" value="1"/>
</dbReference>
<dbReference type="Gene3D" id="3.30.360.10">
    <property type="entry name" value="Dihydrodipicolinate Reductase, domain 2"/>
    <property type="match status" value="1"/>
</dbReference>
<dbReference type="Gene3D" id="3.40.50.720">
    <property type="entry name" value="NAD(P)-binding Rossmann-like Domain"/>
    <property type="match status" value="1"/>
</dbReference>
<dbReference type="HAMAP" id="MF_00102">
    <property type="entry name" value="DapB"/>
    <property type="match status" value="1"/>
</dbReference>
<dbReference type="InterPro" id="IPR022663">
    <property type="entry name" value="DapB_C"/>
</dbReference>
<dbReference type="InterPro" id="IPR000846">
    <property type="entry name" value="DapB_N"/>
</dbReference>
<dbReference type="InterPro" id="IPR022664">
    <property type="entry name" value="DapB_N_CS"/>
</dbReference>
<dbReference type="InterPro" id="IPR023940">
    <property type="entry name" value="DHDPR_bac"/>
</dbReference>
<dbReference type="InterPro" id="IPR036291">
    <property type="entry name" value="NAD(P)-bd_dom_sf"/>
</dbReference>
<dbReference type="NCBIfam" id="TIGR00036">
    <property type="entry name" value="dapB"/>
    <property type="match status" value="1"/>
</dbReference>
<dbReference type="PANTHER" id="PTHR20836:SF0">
    <property type="entry name" value="4-HYDROXY-TETRAHYDRODIPICOLINATE REDUCTASE 1, CHLOROPLASTIC-RELATED"/>
    <property type="match status" value="1"/>
</dbReference>
<dbReference type="PANTHER" id="PTHR20836">
    <property type="entry name" value="DIHYDRODIPICOLINATE REDUCTASE"/>
    <property type="match status" value="1"/>
</dbReference>
<dbReference type="Pfam" id="PF05173">
    <property type="entry name" value="DapB_C"/>
    <property type="match status" value="1"/>
</dbReference>
<dbReference type="Pfam" id="PF01113">
    <property type="entry name" value="DapB_N"/>
    <property type="match status" value="1"/>
</dbReference>
<dbReference type="PIRSF" id="PIRSF000161">
    <property type="entry name" value="DHPR"/>
    <property type="match status" value="1"/>
</dbReference>
<dbReference type="SUPFAM" id="SSF55347">
    <property type="entry name" value="Glyceraldehyde-3-phosphate dehydrogenase-like, C-terminal domain"/>
    <property type="match status" value="1"/>
</dbReference>
<dbReference type="SUPFAM" id="SSF51735">
    <property type="entry name" value="NAD(P)-binding Rossmann-fold domains"/>
    <property type="match status" value="1"/>
</dbReference>
<dbReference type="PROSITE" id="PS01298">
    <property type="entry name" value="DAPB"/>
    <property type="match status" value="1"/>
</dbReference>
<name>DAPB_HELPH</name>
<proteinExistence type="inferred from homology"/>
<organism>
    <name type="scientific">Helicobacter pylori (strain HPAG1)</name>
    <dbReference type="NCBI Taxonomy" id="357544"/>
    <lineage>
        <taxon>Bacteria</taxon>
        <taxon>Pseudomonadati</taxon>
        <taxon>Campylobacterota</taxon>
        <taxon>Epsilonproteobacteria</taxon>
        <taxon>Campylobacterales</taxon>
        <taxon>Helicobacteraceae</taxon>
        <taxon>Helicobacter</taxon>
    </lineage>
</organism>
<reference key="1">
    <citation type="journal article" date="2006" name="Proc. Natl. Acad. Sci. U.S.A.">
        <title>The complete genome sequence of a chronic atrophic gastritis Helicobacter pylori strain: evolution during disease progression.</title>
        <authorList>
            <person name="Oh J.D."/>
            <person name="Kling-Baeckhed H."/>
            <person name="Giannakis M."/>
            <person name="Xu J."/>
            <person name="Fulton R.S."/>
            <person name="Fulton L.A."/>
            <person name="Cordum H.S."/>
            <person name="Wang C."/>
            <person name="Elliott G."/>
            <person name="Edwards J."/>
            <person name="Mardis E.R."/>
            <person name="Engstrand L.G."/>
            <person name="Gordon J.I."/>
        </authorList>
    </citation>
    <scope>NUCLEOTIDE SEQUENCE [LARGE SCALE GENOMIC DNA]</scope>
    <source>
        <strain>HPAG1</strain>
    </source>
</reference>
<keyword id="KW-0028">Amino-acid biosynthesis</keyword>
<keyword id="KW-0963">Cytoplasm</keyword>
<keyword id="KW-0220">Diaminopimelate biosynthesis</keyword>
<keyword id="KW-0457">Lysine biosynthesis</keyword>
<keyword id="KW-0520">NAD</keyword>
<keyword id="KW-0521">NADP</keyword>
<keyword id="KW-0560">Oxidoreductase</keyword>